<organism>
    <name type="scientific">Klebsiella pneumoniae (strain 342)</name>
    <dbReference type="NCBI Taxonomy" id="507522"/>
    <lineage>
        <taxon>Bacteria</taxon>
        <taxon>Pseudomonadati</taxon>
        <taxon>Pseudomonadota</taxon>
        <taxon>Gammaproteobacteria</taxon>
        <taxon>Enterobacterales</taxon>
        <taxon>Enterobacteriaceae</taxon>
        <taxon>Klebsiella/Raoultella group</taxon>
        <taxon>Klebsiella</taxon>
        <taxon>Klebsiella pneumoniae complex</taxon>
    </lineage>
</organism>
<feature type="chain" id="PRO_1000187390" description="Enolase-phosphatase E1">
    <location>
        <begin position="1"/>
        <end position="229"/>
    </location>
</feature>
<feature type="region of interest" description="Disordered" evidence="2">
    <location>
        <begin position="207"/>
        <end position="229"/>
    </location>
</feature>
<feature type="compositionally biased region" description="Basic and acidic residues" evidence="2">
    <location>
        <begin position="218"/>
        <end position="229"/>
    </location>
</feature>
<reference key="1">
    <citation type="journal article" date="2008" name="PLoS Genet.">
        <title>Complete genome sequence of the N2-fixing broad host range endophyte Klebsiella pneumoniae 342 and virulence predictions verified in mice.</title>
        <authorList>
            <person name="Fouts D.E."/>
            <person name="Tyler H.L."/>
            <person name="DeBoy R.T."/>
            <person name="Daugherty S."/>
            <person name="Ren Q."/>
            <person name="Badger J.H."/>
            <person name="Durkin A.S."/>
            <person name="Huot H."/>
            <person name="Shrivastava S."/>
            <person name="Kothari S."/>
            <person name="Dodson R.J."/>
            <person name="Mohamoud Y."/>
            <person name="Khouri H."/>
            <person name="Roesch L.F.W."/>
            <person name="Krogfelt K.A."/>
            <person name="Struve C."/>
            <person name="Triplett E.W."/>
            <person name="Methe B.A."/>
        </authorList>
    </citation>
    <scope>NUCLEOTIDE SEQUENCE [LARGE SCALE GENOMIC DNA]</scope>
    <source>
        <strain>342</strain>
    </source>
</reference>
<keyword id="KW-0028">Amino-acid biosynthesis</keyword>
<keyword id="KW-0378">Hydrolase</keyword>
<keyword id="KW-0460">Magnesium</keyword>
<keyword id="KW-0479">Metal-binding</keyword>
<keyword id="KW-0486">Methionine biosynthesis</keyword>
<name>MTNC_KLEP3</name>
<protein>
    <recommendedName>
        <fullName evidence="1">Enolase-phosphatase E1</fullName>
        <ecNumber evidence="1">3.1.3.77</ecNumber>
    </recommendedName>
    <alternativeName>
        <fullName evidence="1">2,3-diketo-5-methylthio-1-phosphopentane phosphatase</fullName>
    </alternativeName>
</protein>
<proteinExistence type="inferred from homology"/>
<gene>
    <name evidence="1" type="primary">mtnC</name>
    <name type="ordered locus">KPK_3930</name>
</gene>
<sequence>MIRAIVTDIEGTTSDIRFVHNVLFPYARERLAGFVTAQQYAEPVKTILDNLRRETDAPAASTADLITTLFAFMDEDRKSTALKALQGIIWRDGYLNGDFTGHLYPDVLPALEKWKAQGIDLYVYSSGSVAAQKLLFGYSDEGDITHLFTGYFDTLVGAKREVQSYRNIAEHLGHAPGTILFLSDIHQELDAAEAAGLRTIQLVRGDRDPASHHPQVQRFDDIHPEQIPA</sequence>
<comment type="function">
    <text evidence="1">Bifunctional enzyme that catalyzes the enolization of 2,3-diketo-5-methylthiopentyl-1-phosphate (DK-MTP-1-P) into the intermediate 2-hydroxy-3-keto-5-methylthiopentenyl-1-phosphate (HK-MTPenyl-1-P), which is then dephosphorylated to form the acireductone 1,2-dihydroxy-3-keto-5-methylthiopentene (DHK-MTPene).</text>
</comment>
<comment type="catalytic activity">
    <reaction evidence="1">
        <text>5-methylsulfanyl-2,3-dioxopentyl phosphate + H2O = 1,2-dihydroxy-5-(methylsulfanyl)pent-1-en-3-one + phosphate</text>
        <dbReference type="Rhea" id="RHEA:21700"/>
        <dbReference type="ChEBI" id="CHEBI:15377"/>
        <dbReference type="ChEBI" id="CHEBI:43474"/>
        <dbReference type="ChEBI" id="CHEBI:49252"/>
        <dbReference type="ChEBI" id="CHEBI:58828"/>
        <dbReference type="EC" id="3.1.3.77"/>
    </reaction>
</comment>
<comment type="cofactor">
    <cofactor evidence="1">
        <name>Mg(2+)</name>
        <dbReference type="ChEBI" id="CHEBI:18420"/>
    </cofactor>
    <text evidence="1">Binds 1 Mg(2+) ion per subunit.</text>
</comment>
<comment type="pathway">
    <text evidence="1">Amino-acid biosynthesis; L-methionine biosynthesis via salvage pathway; L-methionine from S-methyl-5-thio-alpha-D-ribose 1-phosphate: step 3/6.</text>
</comment>
<comment type="pathway">
    <text evidence="1">Amino-acid biosynthesis; L-methionine biosynthesis via salvage pathway; L-methionine from S-methyl-5-thio-alpha-D-ribose 1-phosphate: step 4/6.</text>
</comment>
<comment type="subunit">
    <text evidence="1">Monomer.</text>
</comment>
<comment type="similarity">
    <text evidence="1">Belongs to the HAD-like hydrolase superfamily. MasA/MtnC family.</text>
</comment>
<accession>B5XZU3</accession>
<evidence type="ECO:0000255" key="1">
    <source>
        <dbReference type="HAMAP-Rule" id="MF_01681"/>
    </source>
</evidence>
<evidence type="ECO:0000256" key="2">
    <source>
        <dbReference type="SAM" id="MobiDB-lite"/>
    </source>
</evidence>
<dbReference type="EC" id="3.1.3.77" evidence="1"/>
<dbReference type="EMBL" id="CP000964">
    <property type="protein sequence ID" value="ACI07459.1"/>
    <property type="molecule type" value="Genomic_DNA"/>
</dbReference>
<dbReference type="SMR" id="B5XZU3"/>
<dbReference type="KEGG" id="kpe:KPK_3930"/>
<dbReference type="HOGENOM" id="CLU_023273_0_0_6"/>
<dbReference type="UniPathway" id="UPA00904">
    <property type="reaction ID" value="UER00876"/>
</dbReference>
<dbReference type="UniPathway" id="UPA00904">
    <property type="reaction ID" value="UER00877"/>
</dbReference>
<dbReference type="Proteomes" id="UP000001734">
    <property type="component" value="Chromosome"/>
</dbReference>
<dbReference type="GO" id="GO:0043715">
    <property type="term" value="F:2,3-diketo-5-methylthiopentyl-1-phosphate enolase activity"/>
    <property type="evidence" value="ECO:0007669"/>
    <property type="project" value="UniProtKB-UniRule"/>
</dbReference>
<dbReference type="GO" id="GO:0043716">
    <property type="term" value="F:2-hydroxy-3-keto-5-methylthiopentenyl-1-phosphate phosphatase activity"/>
    <property type="evidence" value="ECO:0007669"/>
    <property type="project" value="UniProtKB-UniRule"/>
</dbReference>
<dbReference type="GO" id="GO:0043874">
    <property type="term" value="F:acireductone synthase activity"/>
    <property type="evidence" value="ECO:0007669"/>
    <property type="project" value="UniProtKB-EC"/>
</dbReference>
<dbReference type="GO" id="GO:0000287">
    <property type="term" value="F:magnesium ion binding"/>
    <property type="evidence" value="ECO:0007669"/>
    <property type="project" value="UniProtKB-UniRule"/>
</dbReference>
<dbReference type="GO" id="GO:0019509">
    <property type="term" value="P:L-methionine salvage from methylthioadenosine"/>
    <property type="evidence" value="ECO:0007669"/>
    <property type="project" value="UniProtKB-UniRule"/>
</dbReference>
<dbReference type="CDD" id="cd01629">
    <property type="entry name" value="HAD_EP"/>
    <property type="match status" value="1"/>
</dbReference>
<dbReference type="FunFam" id="3.40.50.1000:FF:000079">
    <property type="entry name" value="Enolase-phosphatase E1"/>
    <property type="match status" value="1"/>
</dbReference>
<dbReference type="Gene3D" id="1.10.720.60">
    <property type="match status" value="1"/>
</dbReference>
<dbReference type="Gene3D" id="3.40.50.1000">
    <property type="entry name" value="HAD superfamily/HAD-like"/>
    <property type="match status" value="1"/>
</dbReference>
<dbReference type="HAMAP" id="MF_01681">
    <property type="entry name" value="Salvage_MtnC"/>
    <property type="match status" value="1"/>
</dbReference>
<dbReference type="InterPro" id="IPR023943">
    <property type="entry name" value="Enolase-ppase_E1"/>
</dbReference>
<dbReference type="InterPro" id="IPR036412">
    <property type="entry name" value="HAD-like_sf"/>
</dbReference>
<dbReference type="InterPro" id="IPR006439">
    <property type="entry name" value="HAD-SF_hydro_IA"/>
</dbReference>
<dbReference type="InterPro" id="IPR023214">
    <property type="entry name" value="HAD_sf"/>
</dbReference>
<dbReference type="NCBIfam" id="TIGR01691">
    <property type="entry name" value="enolase-ppase"/>
    <property type="match status" value="1"/>
</dbReference>
<dbReference type="NCBIfam" id="TIGR01549">
    <property type="entry name" value="HAD-SF-IA-v1"/>
    <property type="match status" value="1"/>
</dbReference>
<dbReference type="PANTHER" id="PTHR20371">
    <property type="entry name" value="ENOLASE-PHOSPHATASE E1"/>
    <property type="match status" value="1"/>
</dbReference>
<dbReference type="PANTHER" id="PTHR20371:SF1">
    <property type="entry name" value="ENOLASE-PHOSPHATASE E1"/>
    <property type="match status" value="1"/>
</dbReference>
<dbReference type="Pfam" id="PF00702">
    <property type="entry name" value="Hydrolase"/>
    <property type="match status" value="1"/>
</dbReference>
<dbReference type="PRINTS" id="PR00413">
    <property type="entry name" value="HADHALOGNASE"/>
</dbReference>
<dbReference type="SFLD" id="SFLDF00044">
    <property type="entry name" value="enolase-phosphatase"/>
    <property type="match status" value="1"/>
</dbReference>
<dbReference type="SFLD" id="SFLDS00003">
    <property type="entry name" value="Haloacid_Dehalogenase"/>
    <property type="match status" value="1"/>
</dbReference>
<dbReference type="SUPFAM" id="SSF56784">
    <property type="entry name" value="HAD-like"/>
    <property type="match status" value="1"/>
</dbReference>